<evidence type="ECO:0000250" key="1">
    <source>
        <dbReference type="UniProtKB" id="Q3KR82"/>
    </source>
</evidence>
<evidence type="ECO:0000250" key="2">
    <source>
        <dbReference type="UniProtKB" id="Q8BFU1"/>
    </source>
</evidence>
<evidence type="ECO:0000250" key="3">
    <source>
        <dbReference type="UniProtKB" id="Q9NUM3"/>
    </source>
</evidence>
<evidence type="ECO:0000255" key="4"/>
<evidence type="ECO:0000305" key="5"/>
<name>S399A_XENLA</name>
<feature type="chain" id="PRO_0000297604" description="Zinc transporter ZIP9-A">
    <location>
        <begin position="1"/>
        <end position="303"/>
    </location>
</feature>
<feature type="transmembrane region" description="Helical" evidence="4">
    <location>
        <begin position="7"/>
        <end position="27"/>
    </location>
</feature>
<feature type="transmembrane region" description="Helical" evidence="4">
    <location>
        <begin position="35"/>
        <end position="55"/>
    </location>
</feature>
<feature type="transmembrane region" description="Helical" evidence="4">
    <location>
        <begin position="102"/>
        <end position="122"/>
    </location>
</feature>
<feature type="transmembrane region" description="Helical" evidence="4">
    <location>
        <begin position="142"/>
        <end position="162"/>
    </location>
</feature>
<feature type="transmembrane region" description="Helical" evidence="4">
    <location>
        <begin position="172"/>
        <end position="192"/>
    </location>
</feature>
<feature type="transmembrane region" description="Helical" evidence="4">
    <location>
        <begin position="206"/>
        <end position="226"/>
    </location>
</feature>
<feature type="transmembrane region" description="Helical" evidence="4">
    <location>
        <begin position="240"/>
        <end position="260"/>
    </location>
</feature>
<feature type="transmembrane region" description="Helical" evidence="4">
    <location>
        <begin position="282"/>
        <end position="302"/>
    </location>
</feature>
<feature type="glycosylation site" description="N-linked (GlcNAc...) asparagine" evidence="4">
    <location>
        <position position="29"/>
    </location>
</feature>
<feature type="glycosylation site" description="N-linked (GlcNAc...) asparagine" evidence="4">
    <location>
        <position position="237"/>
    </location>
</feature>
<keyword id="KW-1003">Cell membrane</keyword>
<keyword id="KW-0963">Cytoplasm</keyword>
<keyword id="KW-0325">Glycoprotein</keyword>
<keyword id="KW-0333">Golgi apparatus</keyword>
<keyword id="KW-0406">Ion transport</keyword>
<keyword id="KW-0472">Membrane</keyword>
<keyword id="KW-0496">Mitochondrion</keyword>
<keyword id="KW-0539">Nucleus</keyword>
<keyword id="KW-1185">Reference proteome</keyword>
<keyword id="KW-0812">Transmembrane</keyword>
<keyword id="KW-1133">Transmembrane helix</keyword>
<keyword id="KW-0813">Transport</keyword>
<keyword id="KW-0862">Zinc</keyword>
<keyword id="KW-0864">Zinc transport</keyword>
<organism>
    <name type="scientific">Xenopus laevis</name>
    <name type="common">African clawed frog</name>
    <dbReference type="NCBI Taxonomy" id="8355"/>
    <lineage>
        <taxon>Eukaryota</taxon>
        <taxon>Metazoa</taxon>
        <taxon>Chordata</taxon>
        <taxon>Craniata</taxon>
        <taxon>Vertebrata</taxon>
        <taxon>Euteleostomi</taxon>
        <taxon>Amphibia</taxon>
        <taxon>Batrachia</taxon>
        <taxon>Anura</taxon>
        <taxon>Pipoidea</taxon>
        <taxon>Pipidae</taxon>
        <taxon>Xenopodinae</taxon>
        <taxon>Xenopus</taxon>
        <taxon>Xenopus</taxon>
    </lineage>
</organism>
<protein>
    <recommendedName>
        <fullName evidence="3">Zinc transporter ZIP9-A</fullName>
    </recommendedName>
    <alternativeName>
        <fullName>Solute carrier family 39 member 9-A</fullName>
    </alternativeName>
    <alternativeName>
        <fullName>Zrt- and Irt-like protein 9-A</fullName>
        <shortName>ZIP-9-A</shortName>
    </alternativeName>
</protein>
<proteinExistence type="evidence at transcript level"/>
<accession>Q6NTL1</accession>
<reference key="1">
    <citation type="submission" date="2004-04" db="EMBL/GenBank/DDBJ databases">
        <authorList>
            <consortium name="NIH - Xenopus Gene Collection (XGC) project"/>
        </authorList>
    </citation>
    <scope>NUCLEOTIDE SEQUENCE [LARGE SCALE MRNA]</scope>
    <source>
        <tissue>Embryo</tissue>
    </source>
</reference>
<comment type="function">
    <text evidence="1 2 3">Transports zinc ions across cell and organelle membranes into the cytoplasm and regulates intracellular zinc homeostasis. Participates in the zinc ions efflux out of the secretory compartments. Regulates intracellular zinc level, resulting in the enhancement of AKT1 and MAPK3/MAPK1 (Erk1/2) phosphorylation in response to the BCR activation (By similarity). Also functions as a membrane androgen receptor that mediates, through a G protein, the non-classical androgen signaling pathway, characterized by the activation of MAPK3/MAPK1 (Erk1/2) and transcription factors CREB1 or ATF1 (By similarity). Moreover, has dual functions as a membrane-bound androgen receptor and as an androgen-dependent zinc transporter both of which are mediated through an inhibitory G protein (Gi) that mediates both MAP kinase and zinc signaling leading to the androgen-dependent apoptotic process (By similarity).</text>
</comment>
<comment type="catalytic activity">
    <reaction evidence="3">
        <text>Zn(2+)(in) = Zn(2+)(out)</text>
        <dbReference type="Rhea" id="RHEA:29351"/>
        <dbReference type="ChEBI" id="CHEBI:29105"/>
    </reaction>
</comment>
<comment type="subcellular location">
    <subcellularLocation>
        <location evidence="3">Golgi apparatus</location>
        <location evidence="3">trans-Golgi network membrane</location>
    </subcellularLocation>
    <subcellularLocation>
        <location evidence="3">Cell membrane</location>
        <topology evidence="3">Multi-pass membrane protein</topology>
    </subcellularLocation>
    <subcellularLocation>
        <location evidence="3">Cytoplasm</location>
        <location evidence="3">Perinuclear region</location>
    </subcellularLocation>
    <subcellularLocation>
        <location evidence="3">Mitochondrion</location>
    </subcellularLocation>
    <subcellularLocation>
        <location evidence="3">Nucleus</location>
    </subcellularLocation>
</comment>
<comment type="similarity">
    <text evidence="5">Belongs to the ZIP transporter (TC 2.A.5) family.</text>
</comment>
<gene>
    <name type="primary">slc39a9-a</name>
    <name type="synonym">zip9-a</name>
</gene>
<sequence>MDDFSSISLLSLAMLVGCYVSGIIPLAVNFSEEKLKLVTVLGAGLLCGTALAVIIPEGVHALYEEILEAKHHDLGEIHKVKEAETGAETSVAHEHDHSNLHAYIGVSLVLGFVFMLLVDQIGSSHMHSADDPEAARAASSKITTTLGLVVHAAADGVALGAAASTSQTSVQLIVFVAIMLHKAPAAFGLVSFLMHAGLERNRIRKHLLVFALAAPVLSMLTYLGLSKSSKEALSEINATGVAMLFSAGTFLYVATVHVLPEVGGMGHSHKPDVGAAKGLSRLEVCALVLGCLIPLVLSIGHQH</sequence>
<dbReference type="EMBL" id="BC068950">
    <property type="protein sequence ID" value="AAH68950.1"/>
    <property type="molecule type" value="mRNA"/>
</dbReference>
<dbReference type="RefSeq" id="NP_001084505.1">
    <property type="nucleotide sequence ID" value="NM_001091036.1"/>
</dbReference>
<dbReference type="SMR" id="Q6NTL1"/>
<dbReference type="GlyCosmos" id="Q6NTL1">
    <property type="glycosylation" value="2 sites, No reported glycans"/>
</dbReference>
<dbReference type="DNASU" id="414449"/>
<dbReference type="GeneID" id="414449"/>
<dbReference type="KEGG" id="xla:414449"/>
<dbReference type="AGR" id="Xenbase:XB-GENE-6256480"/>
<dbReference type="CTD" id="414449"/>
<dbReference type="Xenbase" id="XB-GENE-6256480">
    <property type="gene designation" value="slc39a9.S"/>
</dbReference>
<dbReference type="OrthoDB" id="19859at2759"/>
<dbReference type="Proteomes" id="UP000186698">
    <property type="component" value="Chromosome 8S"/>
</dbReference>
<dbReference type="Bgee" id="414449">
    <property type="expression patterns" value="Expressed in egg cell and 19 other cell types or tissues"/>
</dbReference>
<dbReference type="GO" id="GO:0031966">
    <property type="term" value="C:mitochondrial membrane"/>
    <property type="evidence" value="ECO:0000250"/>
    <property type="project" value="UniProtKB"/>
</dbReference>
<dbReference type="GO" id="GO:0005739">
    <property type="term" value="C:mitochondrion"/>
    <property type="evidence" value="ECO:0000250"/>
    <property type="project" value="UniProtKB"/>
</dbReference>
<dbReference type="GO" id="GO:0005634">
    <property type="term" value="C:nucleus"/>
    <property type="evidence" value="ECO:0000250"/>
    <property type="project" value="UniProtKB"/>
</dbReference>
<dbReference type="GO" id="GO:0048471">
    <property type="term" value="C:perinuclear region of cytoplasm"/>
    <property type="evidence" value="ECO:0000250"/>
    <property type="project" value="UniProtKB"/>
</dbReference>
<dbReference type="GO" id="GO:0005886">
    <property type="term" value="C:plasma membrane"/>
    <property type="evidence" value="ECO:0000250"/>
    <property type="project" value="UniProtKB"/>
</dbReference>
<dbReference type="GO" id="GO:0005802">
    <property type="term" value="C:trans-Golgi network"/>
    <property type="evidence" value="ECO:0000250"/>
    <property type="project" value="UniProtKB"/>
</dbReference>
<dbReference type="GO" id="GO:0005497">
    <property type="term" value="F:androgen binding"/>
    <property type="evidence" value="ECO:0000250"/>
    <property type="project" value="UniProtKB"/>
</dbReference>
<dbReference type="GO" id="GO:0004930">
    <property type="term" value="F:G protein-coupled receptor activity"/>
    <property type="evidence" value="ECO:0000250"/>
    <property type="project" value="UniProtKB"/>
</dbReference>
<dbReference type="GO" id="GO:0022883">
    <property type="term" value="F:zinc efflux transmembrane transporter activity"/>
    <property type="evidence" value="ECO:0000250"/>
    <property type="project" value="UniProtKB"/>
</dbReference>
<dbReference type="GO" id="GO:0005385">
    <property type="term" value="F:zinc ion transmembrane transporter activity"/>
    <property type="evidence" value="ECO:0000250"/>
    <property type="project" value="UniProtKB"/>
</dbReference>
<dbReference type="GO" id="GO:0070830">
    <property type="term" value="P:bicellular tight junction assembly"/>
    <property type="evidence" value="ECO:0000250"/>
    <property type="project" value="UniProtKB"/>
</dbReference>
<dbReference type="GO" id="GO:0006882">
    <property type="term" value="P:intracellular zinc ion homeostasis"/>
    <property type="evidence" value="ECO:0000250"/>
    <property type="project" value="UniProtKB"/>
</dbReference>
<dbReference type="GO" id="GO:2000654">
    <property type="term" value="P:regulation of cellular response to testosterone stimulus"/>
    <property type="evidence" value="ECO:0000250"/>
    <property type="project" value="UniProtKB"/>
</dbReference>
<dbReference type="GO" id="GO:1905562">
    <property type="term" value="P:regulation of vascular endothelial cell proliferation"/>
    <property type="evidence" value="ECO:0000250"/>
    <property type="project" value="UniProtKB"/>
</dbReference>
<dbReference type="GO" id="GO:0071577">
    <property type="term" value="P:zinc ion transmembrane transport"/>
    <property type="evidence" value="ECO:0000250"/>
    <property type="project" value="UniProtKB"/>
</dbReference>
<dbReference type="InterPro" id="IPR003689">
    <property type="entry name" value="ZIP"/>
</dbReference>
<dbReference type="InterPro" id="IPR045891">
    <property type="entry name" value="ZIP9"/>
</dbReference>
<dbReference type="PANTHER" id="PTHR16133">
    <property type="entry name" value="SOLUTE CARRIER FAMILY 39 ZINC TRANSPORTER , MEMBER 9-RELATED"/>
    <property type="match status" value="1"/>
</dbReference>
<dbReference type="PANTHER" id="PTHR16133:SF5">
    <property type="entry name" value="ZINC TRANSPORTER ZIP9"/>
    <property type="match status" value="1"/>
</dbReference>
<dbReference type="Pfam" id="PF02535">
    <property type="entry name" value="Zip"/>
    <property type="match status" value="1"/>
</dbReference>